<keyword id="KW-0204">Cytolysis</keyword>
<keyword id="KW-0354">Hemolysis</keyword>
<keyword id="KW-0964">Secreted</keyword>
<keyword id="KW-0732">Signal</keyword>
<keyword id="KW-0800">Toxin</keyword>
<keyword id="KW-0843">Virulence</keyword>
<gene>
    <name type="primary">lukDv</name>
    <name type="synonym">hlgB</name>
    <name type="ordered locus">SAS1748</name>
</gene>
<evidence type="ECO:0000250" key="1"/>
<evidence type="ECO:0000255" key="2"/>
<evidence type="ECO:0000305" key="3"/>
<accession>Q6G8A9</accession>
<proteinExistence type="inferred from homology"/>
<sequence length="327" mass="36889">MKMKKLVKSSVASSIALLLLSNTVDAAQHITPVSEKKVDDKITLYKTTATSDNDKLNISQILTFNFIKDKSYDKDTLVLKAAGNINSGYKKPNPKDYNYSQFYWGGKYNVSVSSESNDAVNVVDYAPKNQNEEFQVQQTLGYSYGGDINISNGLSGGLNGSKSFSETINYKQESYRTTIDRKTNHKSIGWGVEAHKIMNNGWGPYGRDSYDPTYGNELFLGGRQSSSNAGQNFLPTHQMPLLARGNFNPEFISVLSHKQNDTKKSKIKVTYQREMDRYTNQWNRLHWVGNNYKNQNTVTFTSTYEVDWQNHTVKLIGTDSKETNPGV</sequence>
<dbReference type="EMBL" id="BX571857">
    <property type="protein sequence ID" value="CAG43552.1"/>
    <property type="molecule type" value="Genomic_DNA"/>
</dbReference>
<dbReference type="SMR" id="Q6G8A9"/>
<dbReference type="ABCD" id="Q6G8A9">
    <property type="antibodies" value="1 sequenced antibody"/>
</dbReference>
<dbReference type="KEGG" id="sas:SAS1748"/>
<dbReference type="HOGENOM" id="CLU_055394_0_1_9"/>
<dbReference type="GO" id="GO:0005576">
    <property type="term" value="C:extracellular region"/>
    <property type="evidence" value="ECO:0007669"/>
    <property type="project" value="UniProtKB-SubCell"/>
</dbReference>
<dbReference type="GO" id="GO:0090729">
    <property type="term" value="F:toxin activity"/>
    <property type="evidence" value="ECO:0007669"/>
    <property type="project" value="UniProtKB-KW"/>
</dbReference>
<dbReference type="GO" id="GO:0051715">
    <property type="term" value="P:cytolysis in another organism"/>
    <property type="evidence" value="ECO:0007669"/>
    <property type="project" value="InterPro"/>
</dbReference>
<dbReference type="Gene3D" id="2.70.240.10">
    <property type="entry name" value="Leukocidin/porin MspA"/>
    <property type="match status" value="1"/>
</dbReference>
<dbReference type="InterPro" id="IPR003963">
    <property type="entry name" value="Bi-component_toxin_staph"/>
</dbReference>
<dbReference type="InterPro" id="IPR016183">
    <property type="entry name" value="Leukocidin/Hemolysin_toxin"/>
</dbReference>
<dbReference type="InterPro" id="IPR036435">
    <property type="entry name" value="Leukocidin/porin_MspA_sf"/>
</dbReference>
<dbReference type="NCBIfam" id="TIGR01002">
    <property type="entry name" value="hlyII"/>
    <property type="match status" value="1"/>
</dbReference>
<dbReference type="Pfam" id="PF07968">
    <property type="entry name" value="Leukocidin"/>
    <property type="match status" value="1"/>
</dbReference>
<dbReference type="PRINTS" id="PR01468">
    <property type="entry name" value="BICOMPNTOXIN"/>
</dbReference>
<dbReference type="SUPFAM" id="SSF56959">
    <property type="entry name" value="Leukocidin-like"/>
    <property type="match status" value="1"/>
</dbReference>
<organism>
    <name type="scientific">Staphylococcus aureus (strain MSSA476)</name>
    <dbReference type="NCBI Taxonomy" id="282459"/>
    <lineage>
        <taxon>Bacteria</taxon>
        <taxon>Bacillati</taxon>
        <taxon>Bacillota</taxon>
        <taxon>Bacilli</taxon>
        <taxon>Bacillales</taxon>
        <taxon>Staphylococcaceae</taxon>
        <taxon>Staphylococcus</taxon>
    </lineage>
</organism>
<feature type="signal peptide" evidence="2">
    <location>
        <begin position="1"/>
        <end position="26"/>
    </location>
</feature>
<feature type="chain" id="PRO_0000045219" description="Leucotoxin LukDv">
    <location>
        <begin position="27"/>
        <end position="327"/>
    </location>
</feature>
<name>LUKDV_STAAS</name>
<protein>
    <recommendedName>
        <fullName>Leucotoxin LukDv</fullName>
    </recommendedName>
    <alternativeName>
        <fullName>Variant of LukD</fullName>
    </alternativeName>
</protein>
<reference key="1">
    <citation type="journal article" date="2004" name="Proc. Natl. Acad. Sci. U.S.A.">
        <title>Complete genomes of two clinical Staphylococcus aureus strains: evidence for the rapid evolution of virulence and drug resistance.</title>
        <authorList>
            <person name="Holden M.T.G."/>
            <person name="Feil E.J."/>
            <person name="Lindsay J.A."/>
            <person name="Peacock S.J."/>
            <person name="Day N.P.J."/>
            <person name="Enright M.C."/>
            <person name="Foster T.J."/>
            <person name="Moore C.E."/>
            <person name="Hurst L."/>
            <person name="Atkin R."/>
            <person name="Barron A."/>
            <person name="Bason N."/>
            <person name="Bentley S.D."/>
            <person name="Chillingworth C."/>
            <person name="Chillingworth T."/>
            <person name="Churcher C."/>
            <person name="Clark L."/>
            <person name="Corton C."/>
            <person name="Cronin A."/>
            <person name="Doggett J."/>
            <person name="Dowd L."/>
            <person name="Feltwell T."/>
            <person name="Hance Z."/>
            <person name="Harris B."/>
            <person name="Hauser H."/>
            <person name="Holroyd S."/>
            <person name="Jagels K."/>
            <person name="James K.D."/>
            <person name="Lennard N."/>
            <person name="Line A."/>
            <person name="Mayes R."/>
            <person name="Moule S."/>
            <person name="Mungall K."/>
            <person name="Ormond D."/>
            <person name="Quail M.A."/>
            <person name="Rabbinowitsch E."/>
            <person name="Rutherford K.M."/>
            <person name="Sanders M."/>
            <person name="Sharp S."/>
            <person name="Simmonds M."/>
            <person name="Stevens K."/>
            <person name="Whitehead S."/>
            <person name="Barrell B.G."/>
            <person name="Spratt B.G."/>
            <person name="Parkhill J."/>
        </authorList>
    </citation>
    <scope>NUCLEOTIDE SEQUENCE [LARGE SCALE GENOMIC DNA]</scope>
    <source>
        <strain>MSSA476</strain>
    </source>
</reference>
<reference key="2">
    <citation type="journal article" date="2004" name="Biosci. Biotechnol. Biochem.">
        <title>Bacterial two-component and hetero-heptameric pore-forming cytolytic toxins: structures, pore-forming mechanism, and organization of the genes.</title>
        <authorList>
            <person name="Kaneko J."/>
            <person name="Kamio Y."/>
        </authorList>
    </citation>
    <scope>SIMILARITY TO LUKDV</scope>
</reference>
<comment type="function">
    <text evidence="1">Part of a bi-component leucotoxin that acts by forming pores in the membrane of the target cells. The activity of LukEv-LukDv to rabbit leukocytes is similar to that of the Panton-Valentine leucocidin (PVL). LukEv-LukDv is hemolytic to rabbit red blood cells although the activity is only 8% of gamma-hemolysin (By similarity).</text>
</comment>
<comment type="subunit">
    <text evidence="1">Toxicity requires sequential binding and synergistic association of a class S and a class F component which form heterooligomeric complexes. LukEv (class S) associates with LukDv (class F) (By similarity).</text>
</comment>
<comment type="subcellular location">
    <subcellularLocation>
        <location evidence="1">Secreted</location>
    </subcellularLocation>
</comment>
<comment type="similarity">
    <text evidence="3">Belongs to the aerolysin family.</text>
</comment>